<reference key="1">
    <citation type="journal article" date="2008" name="Genome Res.">
        <title>Comparative genome analysis of Salmonella enteritidis PT4 and Salmonella gallinarum 287/91 provides insights into evolutionary and host adaptation pathways.</title>
        <authorList>
            <person name="Thomson N.R."/>
            <person name="Clayton D.J."/>
            <person name="Windhorst D."/>
            <person name="Vernikos G."/>
            <person name="Davidson S."/>
            <person name="Churcher C."/>
            <person name="Quail M.A."/>
            <person name="Stevens M."/>
            <person name="Jones M.A."/>
            <person name="Watson M."/>
            <person name="Barron A."/>
            <person name="Layton A."/>
            <person name="Pickard D."/>
            <person name="Kingsley R.A."/>
            <person name="Bignell A."/>
            <person name="Clark L."/>
            <person name="Harris B."/>
            <person name="Ormond D."/>
            <person name="Abdellah Z."/>
            <person name="Brooks K."/>
            <person name="Cherevach I."/>
            <person name="Chillingworth T."/>
            <person name="Woodward J."/>
            <person name="Norberczak H."/>
            <person name="Lord A."/>
            <person name="Arrowsmith C."/>
            <person name="Jagels K."/>
            <person name="Moule S."/>
            <person name="Mungall K."/>
            <person name="Saunders M."/>
            <person name="Whitehead S."/>
            <person name="Chabalgoity J.A."/>
            <person name="Maskell D."/>
            <person name="Humphreys T."/>
            <person name="Roberts M."/>
            <person name="Barrow P.A."/>
            <person name="Dougan G."/>
            <person name="Parkhill J."/>
        </authorList>
    </citation>
    <scope>NUCLEOTIDE SEQUENCE [LARGE SCALE GENOMIC DNA]</scope>
    <source>
        <strain>P125109</strain>
    </source>
</reference>
<proteinExistence type="inferred from homology"/>
<organism>
    <name type="scientific">Salmonella enteritidis PT4 (strain P125109)</name>
    <dbReference type="NCBI Taxonomy" id="550537"/>
    <lineage>
        <taxon>Bacteria</taxon>
        <taxon>Pseudomonadati</taxon>
        <taxon>Pseudomonadota</taxon>
        <taxon>Gammaproteobacteria</taxon>
        <taxon>Enterobacterales</taxon>
        <taxon>Enterobacteriaceae</taxon>
        <taxon>Salmonella</taxon>
    </lineage>
</organism>
<evidence type="ECO:0000250" key="1"/>
<evidence type="ECO:0000255" key="2">
    <source>
        <dbReference type="HAMAP-Rule" id="MF_00100"/>
    </source>
</evidence>
<evidence type="ECO:0000256" key="3">
    <source>
        <dbReference type="SAM" id="MobiDB-lite"/>
    </source>
</evidence>
<accession>B5QZV8</accession>
<protein>
    <recommendedName>
        <fullName evidence="2">Translation initiation factor IF-2</fullName>
    </recommendedName>
</protein>
<gene>
    <name evidence="2" type="primary">infB</name>
    <name type="ordered locus">SEN3121</name>
</gene>
<sequence>MTDVTLKALAAERQVSVDRLVQQFADAGIRKSADDSVSAQEKQTLLAHLNREAVSGPDKLTLQRKTRSTLNIPGTGGKSKSVQIEVRKKRTFVKRDPQEAERLAAEEQAQREAEEQARREAEEQAKREAQQKAEREAAEQAKREAAEKAKREAAEKDKVSNQQTDDMTKTAQAEKARRENEAAELKRKAEEEARRKLEEEARRVAEEARRMAEENKWTATPEPVEDTSDYHVTTSQHARQAEDENDREVEGGRGRGRNAKAARPAKKGKHAESKADREEARAAVRGGKGGKRKGSSLQQGFQKPAQAVNRDVVIGETITVGELANKMAVKGSQVIKAMMKLGAMATINQVIDQETAQLVAEEMGHKVILRRENELEEAVMSDRDTGAAAEPRAPVVTIMGHVDHGKTSLLDYIRSTKVASGEAGGITQHIGAYHVETDNGMITFLDTPGHAAFTSMRARGAQATDIVVLVVAADDGVMPQTIEAIQHAKAAGVPVVVAVNKIDKPEADPDRVKNELSQYGILPEEWGGESQFVHVSAKAGTGIDELLDAILLQAEVLELKAVRKGMASGAVIESFLDKGRGPVATVLVREGTLHKGDIVLCGFEYGRVRAMRNELGQEVLEAGPSIPVEILGLSGVPAAGDEVTVVRDEKKAREVALYRQGKFREVKLARQQKSKLENMFANMTEGEVHEVNIVLKADVQGSVEAISDSLLKLSTDEVKVKIIGSGVGGITETDATLAAASNAILVGFNVRADASARKVIESESLDLRYYSVIYNLIDEVKAAMSGMLSPELKQQIIGLAEVRDVFKSPKFGAIAGCMVTEGTIKRHNPIRVLRDNVVIYEGELESLRRFKDDVNEVRNGMECGIGVKNYNDVRVGDMIEVFEIIEIQRTIA</sequence>
<feature type="chain" id="PRO_1000093819" description="Translation initiation factor IF-2">
    <location>
        <begin position="1"/>
        <end position="892"/>
    </location>
</feature>
<feature type="domain" description="tr-type G">
    <location>
        <begin position="391"/>
        <end position="560"/>
    </location>
</feature>
<feature type="region of interest" description="Disordered" evidence="3">
    <location>
        <begin position="88"/>
        <end position="305"/>
    </location>
</feature>
<feature type="region of interest" description="G1" evidence="1">
    <location>
        <begin position="400"/>
        <end position="407"/>
    </location>
</feature>
<feature type="region of interest" description="G2" evidence="1">
    <location>
        <begin position="425"/>
        <end position="429"/>
    </location>
</feature>
<feature type="region of interest" description="G3" evidence="1">
    <location>
        <begin position="446"/>
        <end position="449"/>
    </location>
</feature>
<feature type="region of interest" description="G4" evidence="1">
    <location>
        <begin position="500"/>
        <end position="503"/>
    </location>
</feature>
<feature type="region of interest" description="G5" evidence="1">
    <location>
        <begin position="536"/>
        <end position="538"/>
    </location>
</feature>
<feature type="compositionally biased region" description="Basic and acidic residues" evidence="3">
    <location>
        <begin position="93"/>
        <end position="159"/>
    </location>
</feature>
<feature type="compositionally biased region" description="Basic and acidic residues" evidence="3">
    <location>
        <begin position="166"/>
        <end position="216"/>
    </location>
</feature>
<feature type="compositionally biased region" description="Basic residues" evidence="3">
    <location>
        <begin position="254"/>
        <end position="269"/>
    </location>
</feature>
<feature type="compositionally biased region" description="Basic and acidic residues" evidence="3">
    <location>
        <begin position="270"/>
        <end position="282"/>
    </location>
</feature>
<feature type="binding site" evidence="2">
    <location>
        <begin position="400"/>
        <end position="407"/>
    </location>
    <ligand>
        <name>GTP</name>
        <dbReference type="ChEBI" id="CHEBI:37565"/>
    </ligand>
</feature>
<feature type="binding site" evidence="2">
    <location>
        <begin position="446"/>
        <end position="450"/>
    </location>
    <ligand>
        <name>GTP</name>
        <dbReference type="ChEBI" id="CHEBI:37565"/>
    </ligand>
</feature>
<feature type="binding site" evidence="2">
    <location>
        <begin position="500"/>
        <end position="503"/>
    </location>
    <ligand>
        <name>GTP</name>
        <dbReference type="ChEBI" id="CHEBI:37565"/>
    </ligand>
</feature>
<name>IF2_SALEP</name>
<dbReference type="EMBL" id="AM933172">
    <property type="protein sequence ID" value="CAR34697.1"/>
    <property type="molecule type" value="Genomic_DNA"/>
</dbReference>
<dbReference type="RefSeq" id="WP_000133064.1">
    <property type="nucleotide sequence ID" value="NC_011294.1"/>
</dbReference>
<dbReference type="SMR" id="B5QZV8"/>
<dbReference type="KEGG" id="set:SEN3121"/>
<dbReference type="HOGENOM" id="CLU_006301_6_3_6"/>
<dbReference type="Proteomes" id="UP000000613">
    <property type="component" value="Chromosome"/>
</dbReference>
<dbReference type="GO" id="GO:0005829">
    <property type="term" value="C:cytosol"/>
    <property type="evidence" value="ECO:0007669"/>
    <property type="project" value="TreeGrafter"/>
</dbReference>
<dbReference type="GO" id="GO:0005525">
    <property type="term" value="F:GTP binding"/>
    <property type="evidence" value="ECO:0007669"/>
    <property type="project" value="UniProtKB-KW"/>
</dbReference>
<dbReference type="GO" id="GO:0003924">
    <property type="term" value="F:GTPase activity"/>
    <property type="evidence" value="ECO:0007669"/>
    <property type="project" value="UniProtKB-UniRule"/>
</dbReference>
<dbReference type="GO" id="GO:0097216">
    <property type="term" value="F:guanosine tetraphosphate binding"/>
    <property type="evidence" value="ECO:0007669"/>
    <property type="project" value="UniProtKB-ARBA"/>
</dbReference>
<dbReference type="GO" id="GO:0003743">
    <property type="term" value="F:translation initiation factor activity"/>
    <property type="evidence" value="ECO:0007669"/>
    <property type="project" value="UniProtKB-UniRule"/>
</dbReference>
<dbReference type="CDD" id="cd01887">
    <property type="entry name" value="IF2_eIF5B"/>
    <property type="match status" value="1"/>
</dbReference>
<dbReference type="CDD" id="cd03702">
    <property type="entry name" value="IF2_mtIF2_II"/>
    <property type="match status" value="1"/>
</dbReference>
<dbReference type="CDD" id="cd03692">
    <property type="entry name" value="mtIF2_IVc"/>
    <property type="match status" value="1"/>
</dbReference>
<dbReference type="FunFam" id="2.40.30.10:FF:000007">
    <property type="entry name" value="Translation initiation factor IF-2"/>
    <property type="match status" value="1"/>
</dbReference>
<dbReference type="FunFam" id="2.40.30.10:FF:000008">
    <property type="entry name" value="Translation initiation factor IF-2"/>
    <property type="match status" value="1"/>
</dbReference>
<dbReference type="FunFam" id="3.30.56.50:FF:000001">
    <property type="entry name" value="Translation initiation factor IF-2"/>
    <property type="match status" value="1"/>
</dbReference>
<dbReference type="FunFam" id="3.40.50.10050:FF:000001">
    <property type="entry name" value="Translation initiation factor IF-2"/>
    <property type="match status" value="1"/>
</dbReference>
<dbReference type="FunFam" id="3.40.50.300:FF:000019">
    <property type="entry name" value="Translation initiation factor IF-2"/>
    <property type="match status" value="1"/>
</dbReference>
<dbReference type="Gene3D" id="3.40.50.300">
    <property type="entry name" value="P-loop containing nucleotide triphosphate hydrolases"/>
    <property type="match status" value="1"/>
</dbReference>
<dbReference type="Gene3D" id="3.30.56.50">
    <property type="entry name" value="Putative DNA-binding domain, N-terminal subdomain of bacterial translation initiation factor IF2"/>
    <property type="match status" value="1"/>
</dbReference>
<dbReference type="Gene3D" id="2.40.30.10">
    <property type="entry name" value="Translation factors"/>
    <property type="match status" value="2"/>
</dbReference>
<dbReference type="Gene3D" id="3.40.50.10050">
    <property type="entry name" value="Translation initiation factor IF- 2, domain 3"/>
    <property type="match status" value="1"/>
</dbReference>
<dbReference type="HAMAP" id="MF_00100_B">
    <property type="entry name" value="IF_2_B"/>
    <property type="match status" value="1"/>
</dbReference>
<dbReference type="InterPro" id="IPR009061">
    <property type="entry name" value="DNA-bd_dom_put_sf"/>
</dbReference>
<dbReference type="InterPro" id="IPR053905">
    <property type="entry name" value="EF-G-like_DII"/>
</dbReference>
<dbReference type="InterPro" id="IPR004161">
    <property type="entry name" value="EFTu-like_2"/>
</dbReference>
<dbReference type="InterPro" id="IPR013575">
    <property type="entry name" value="IF2_assoc_dom_bac"/>
</dbReference>
<dbReference type="InterPro" id="IPR044145">
    <property type="entry name" value="IF2_II"/>
</dbReference>
<dbReference type="InterPro" id="IPR006847">
    <property type="entry name" value="IF2_N"/>
</dbReference>
<dbReference type="InterPro" id="IPR027417">
    <property type="entry name" value="P-loop_NTPase"/>
</dbReference>
<dbReference type="InterPro" id="IPR005225">
    <property type="entry name" value="Small_GTP-bd"/>
</dbReference>
<dbReference type="InterPro" id="IPR000795">
    <property type="entry name" value="T_Tr_GTP-bd_dom"/>
</dbReference>
<dbReference type="InterPro" id="IPR000178">
    <property type="entry name" value="TF_IF2_bacterial-like"/>
</dbReference>
<dbReference type="InterPro" id="IPR015760">
    <property type="entry name" value="TIF_IF2"/>
</dbReference>
<dbReference type="InterPro" id="IPR023115">
    <property type="entry name" value="TIF_IF2_dom3"/>
</dbReference>
<dbReference type="InterPro" id="IPR036925">
    <property type="entry name" value="TIF_IF2_dom3_sf"/>
</dbReference>
<dbReference type="InterPro" id="IPR009000">
    <property type="entry name" value="Transl_B-barrel_sf"/>
</dbReference>
<dbReference type="NCBIfam" id="TIGR00487">
    <property type="entry name" value="IF-2"/>
    <property type="match status" value="1"/>
</dbReference>
<dbReference type="NCBIfam" id="TIGR00231">
    <property type="entry name" value="small_GTP"/>
    <property type="match status" value="1"/>
</dbReference>
<dbReference type="PANTHER" id="PTHR43381:SF5">
    <property type="entry name" value="TR-TYPE G DOMAIN-CONTAINING PROTEIN"/>
    <property type="match status" value="1"/>
</dbReference>
<dbReference type="PANTHER" id="PTHR43381">
    <property type="entry name" value="TRANSLATION INITIATION FACTOR IF-2-RELATED"/>
    <property type="match status" value="1"/>
</dbReference>
<dbReference type="Pfam" id="PF22042">
    <property type="entry name" value="EF-G_D2"/>
    <property type="match status" value="1"/>
</dbReference>
<dbReference type="Pfam" id="PF00009">
    <property type="entry name" value="GTP_EFTU"/>
    <property type="match status" value="1"/>
</dbReference>
<dbReference type="Pfam" id="PF03144">
    <property type="entry name" value="GTP_EFTU_D2"/>
    <property type="match status" value="1"/>
</dbReference>
<dbReference type="Pfam" id="PF11987">
    <property type="entry name" value="IF-2"/>
    <property type="match status" value="1"/>
</dbReference>
<dbReference type="Pfam" id="PF08364">
    <property type="entry name" value="IF2_assoc"/>
    <property type="match status" value="1"/>
</dbReference>
<dbReference type="Pfam" id="PF04760">
    <property type="entry name" value="IF2_N"/>
    <property type="match status" value="2"/>
</dbReference>
<dbReference type="SUPFAM" id="SSF52156">
    <property type="entry name" value="Initiation factor IF2/eIF5b, domain 3"/>
    <property type="match status" value="1"/>
</dbReference>
<dbReference type="SUPFAM" id="SSF52540">
    <property type="entry name" value="P-loop containing nucleoside triphosphate hydrolases"/>
    <property type="match status" value="1"/>
</dbReference>
<dbReference type="SUPFAM" id="SSF46955">
    <property type="entry name" value="Putative DNA-binding domain"/>
    <property type="match status" value="1"/>
</dbReference>
<dbReference type="SUPFAM" id="SSF50447">
    <property type="entry name" value="Translation proteins"/>
    <property type="match status" value="2"/>
</dbReference>
<dbReference type="PROSITE" id="PS51722">
    <property type="entry name" value="G_TR_2"/>
    <property type="match status" value="1"/>
</dbReference>
<dbReference type="PROSITE" id="PS01176">
    <property type="entry name" value="IF2"/>
    <property type="match status" value="1"/>
</dbReference>
<keyword id="KW-0963">Cytoplasm</keyword>
<keyword id="KW-0342">GTP-binding</keyword>
<keyword id="KW-0396">Initiation factor</keyword>
<keyword id="KW-0547">Nucleotide-binding</keyword>
<keyword id="KW-0648">Protein biosynthesis</keyword>
<comment type="function">
    <text evidence="2">One of the essential components for the initiation of protein synthesis. Protects formylmethionyl-tRNA from spontaneous hydrolysis and promotes its binding to the 30S ribosomal subunits. Also involved in the hydrolysis of GTP during the formation of the 70S ribosomal complex.</text>
</comment>
<comment type="subcellular location">
    <subcellularLocation>
        <location evidence="2">Cytoplasm</location>
    </subcellularLocation>
</comment>
<comment type="similarity">
    <text evidence="2">Belongs to the TRAFAC class translation factor GTPase superfamily. Classic translation factor GTPase family. IF-2 subfamily.</text>
</comment>